<organism>
    <name type="scientific">Listeria monocytogenes serotype 4b (strain F2365)</name>
    <dbReference type="NCBI Taxonomy" id="265669"/>
    <lineage>
        <taxon>Bacteria</taxon>
        <taxon>Bacillati</taxon>
        <taxon>Bacillota</taxon>
        <taxon>Bacilli</taxon>
        <taxon>Bacillales</taxon>
        <taxon>Listeriaceae</taxon>
        <taxon>Listeria</taxon>
    </lineage>
</organism>
<keyword id="KW-0378">Hydrolase</keyword>
<keyword id="KW-0460">Magnesium</keyword>
<keyword id="KW-0479">Metal-binding</keyword>
<keyword id="KW-0520">NAD</keyword>
<keyword id="KW-0786">Thiamine pyrophosphate</keyword>
<accession>Q723S8</accession>
<name>IOLD_LISMF</name>
<sequence length="638" mass="70443">MTEKTIRLTTAQALVKFLNQQYIEVDGEMAPFVDGIFTLFGHGNVVGIGQALEEAPGHLKVYQGKNEQGMAHAAIAYAKQKNRQRIYACSTSAGPGSANLITAAGTALANNLPVLFLPADTFATRQPDPVLQQLEHESSTAITTNDGFQAVSRYFDRVQRPEQLMSALIRAFEVMTNPASAGPATICIAQDTEGEAFDYPVEFFQKRIHYLNRQIPTKRELTEAARLIKASKTPVIIVGGGARYSRAREELIALSEQTNIPLVETHAGKSTLEFDFKNNLGGTGILGTLAANKAIRDADLVIGIGTRYTDFTTSSKTAFDPTTKFININVSRMQTYKLDAFQVVGDAKATLAELAPLLKGYQTQFGNKIAAYKTEWLDERARLQTTKFNRETFTPEIKDQFDQAILNEYADRLQTEFTQTEALITINDNVAPDSIVVCSAGSLPGDLQRLWNPAVPDTYHLEYGYSCMGYEINGALGAKMAAAKKQEVYAIVGDGSFCMSHSELLTSLQYGKKINIMLFDNSGFGCINNLQMANGSDSFFCEFRDSDNQIMQVDYAKIAEGYGAKVYRANTKEDLISALEDAKTQSKTTLIEMKVLPKTMSEGYLNWWNVGVSEVSNKESIKQAYEEKQANLKNARLY</sequence>
<reference key="1">
    <citation type="journal article" date="2004" name="Nucleic Acids Res.">
        <title>Whole genome comparisons of serotype 4b and 1/2a strains of the food-borne pathogen Listeria monocytogenes reveal new insights into the core genome components of this species.</title>
        <authorList>
            <person name="Nelson K.E."/>
            <person name="Fouts D.E."/>
            <person name="Mongodin E.F."/>
            <person name="Ravel J."/>
            <person name="DeBoy R.T."/>
            <person name="Kolonay J.F."/>
            <person name="Rasko D.A."/>
            <person name="Angiuoli S.V."/>
            <person name="Gill S.R."/>
            <person name="Paulsen I.T."/>
            <person name="Peterson J.D."/>
            <person name="White O."/>
            <person name="Nelson W.C."/>
            <person name="Nierman W.C."/>
            <person name="Beanan M.J."/>
            <person name="Brinkac L.M."/>
            <person name="Daugherty S.C."/>
            <person name="Dodson R.J."/>
            <person name="Durkin A.S."/>
            <person name="Madupu R."/>
            <person name="Haft D.H."/>
            <person name="Selengut J."/>
            <person name="Van Aken S.E."/>
            <person name="Khouri H.M."/>
            <person name="Fedorova N."/>
            <person name="Forberger H.A."/>
            <person name="Tran B."/>
            <person name="Kathariou S."/>
            <person name="Wonderling L.D."/>
            <person name="Uhlich G.A."/>
            <person name="Bayles D.O."/>
            <person name="Luchansky J.B."/>
            <person name="Fraser C.M."/>
        </authorList>
    </citation>
    <scope>NUCLEOTIDE SEQUENCE [LARGE SCALE GENOMIC DNA]</scope>
    <source>
        <strain>F2365</strain>
    </source>
</reference>
<comment type="function">
    <text evidence="1">Involved in the cleavage of the C1-C2 bond of 3D-(3,5/4)-trihydroxycyclohexane-1,2-dione (THcHDO) to yield 5-deoxy-glucuronate (5DG).</text>
</comment>
<comment type="catalytic activity">
    <reaction evidence="1">
        <text>3D-3,5/4-trihydroxycyclohexane-1,2-dione + H2O = 5-deoxy-D-glucuronate + H(+)</text>
        <dbReference type="Rhea" id="RHEA:25836"/>
        <dbReference type="ChEBI" id="CHEBI:15377"/>
        <dbReference type="ChEBI" id="CHEBI:15378"/>
        <dbReference type="ChEBI" id="CHEBI:28446"/>
        <dbReference type="ChEBI" id="CHEBI:58852"/>
        <dbReference type="EC" id="3.7.1.22"/>
    </reaction>
</comment>
<comment type="cofactor">
    <cofactor evidence="1">
        <name>Mg(2+)</name>
        <dbReference type="ChEBI" id="CHEBI:18420"/>
    </cofactor>
    <text evidence="1">Binds 1 Mg(2+) ion per subunit.</text>
</comment>
<comment type="cofactor">
    <cofactor evidence="1">
        <name>thiamine diphosphate</name>
        <dbReference type="ChEBI" id="CHEBI:58937"/>
    </cofactor>
    <text evidence="1">Binds 1 thiamine pyrophosphate per subunit.</text>
</comment>
<comment type="pathway">
    <text evidence="1">Polyol metabolism; myo-inositol degradation into acetyl-CoA; acetyl-CoA from myo-inositol: step 3/7.</text>
</comment>
<comment type="similarity">
    <text evidence="1">Belongs to the TPP enzyme family.</text>
</comment>
<comment type="sequence caution" evidence="2">
    <conflict type="erroneous initiation">
        <sequence resource="EMBL-CDS" id="AAT03183"/>
    </conflict>
</comment>
<feature type="chain" id="PRO_0000352547" description="3D-(3,5/4)-trihydroxycyclohexane-1,2-dione hydrolase">
    <location>
        <begin position="1"/>
        <end position="638"/>
    </location>
</feature>
<feature type="region of interest" description="Thiamine pyrophosphate binding" evidence="1">
    <location>
        <begin position="442"/>
        <end position="523"/>
    </location>
</feature>
<feature type="binding site" evidence="1">
    <location>
        <position position="67"/>
    </location>
    <ligand>
        <name>thiamine diphosphate</name>
        <dbReference type="ChEBI" id="CHEBI:58937"/>
    </ligand>
</feature>
<feature type="binding site" evidence="1">
    <location>
        <position position="494"/>
    </location>
    <ligand>
        <name>Mg(2+)</name>
        <dbReference type="ChEBI" id="CHEBI:18420"/>
    </ligand>
</feature>
<feature type="binding site" evidence="1">
    <location>
        <position position="521"/>
    </location>
    <ligand>
        <name>Mg(2+)</name>
        <dbReference type="ChEBI" id="CHEBI:18420"/>
    </ligand>
</feature>
<dbReference type="EC" id="3.7.1.22" evidence="1"/>
<dbReference type="EMBL" id="AE017262">
    <property type="protein sequence ID" value="AAT03183.1"/>
    <property type="status" value="ALT_INIT"/>
    <property type="molecule type" value="Genomic_DNA"/>
</dbReference>
<dbReference type="RefSeq" id="WP_074384934.1">
    <property type="nucleotide sequence ID" value="NC_002973.6"/>
</dbReference>
<dbReference type="SMR" id="Q723S8"/>
<dbReference type="KEGG" id="lmf:LMOf2365_0398"/>
<dbReference type="HOGENOM" id="CLU_013748_6_0_9"/>
<dbReference type="UniPathway" id="UPA00076">
    <property type="reaction ID" value="UER00145"/>
</dbReference>
<dbReference type="GO" id="GO:0005948">
    <property type="term" value="C:acetolactate synthase complex"/>
    <property type="evidence" value="ECO:0007669"/>
    <property type="project" value="TreeGrafter"/>
</dbReference>
<dbReference type="GO" id="GO:0102481">
    <property type="term" value="F:3D-(3,5/4)-trihydroxycyclohexane-1,2-dione hydrolase activity"/>
    <property type="evidence" value="ECO:0007669"/>
    <property type="project" value="UniProtKB-EC"/>
</dbReference>
<dbReference type="GO" id="GO:0003984">
    <property type="term" value="F:acetolactate synthase activity"/>
    <property type="evidence" value="ECO:0007669"/>
    <property type="project" value="TreeGrafter"/>
</dbReference>
<dbReference type="GO" id="GO:0050660">
    <property type="term" value="F:flavin adenine dinucleotide binding"/>
    <property type="evidence" value="ECO:0007669"/>
    <property type="project" value="TreeGrafter"/>
</dbReference>
<dbReference type="GO" id="GO:0000287">
    <property type="term" value="F:magnesium ion binding"/>
    <property type="evidence" value="ECO:0007669"/>
    <property type="project" value="UniProtKB-UniRule"/>
</dbReference>
<dbReference type="GO" id="GO:0030976">
    <property type="term" value="F:thiamine pyrophosphate binding"/>
    <property type="evidence" value="ECO:0007669"/>
    <property type="project" value="UniProtKB-UniRule"/>
</dbReference>
<dbReference type="GO" id="GO:0019310">
    <property type="term" value="P:inositol catabolic process"/>
    <property type="evidence" value="ECO:0007669"/>
    <property type="project" value="UniProtKB-UniRule"/>
</dbReference>
<dbReference type="GO" id="GO:0009097">
    <property type="term" value="P:isoleucine biosynthetic process"/>
    <property type="evidence" value="ECO:0007669"/>
    <property type="project" value="TreeGrafter"/>
</dbReference>
<dbReference type="GO" id="GO:0009099">
    <property type="term" value="P:L-valine biosynthetic process"/>
    <property type="evidence" value="ECO:0007669"/>
    <property type="project" value="TreeGrafter"/>
</dbReference>
<dbReference type="CDD" id="cd07035">
    <property type="entry name" value="TPP_PYR_POX_like"/>
    <property type="match status" value="1"/>
</dbReference>
<dbReference type="Gene3D" id="3.40.50.970">
    <property type="match status" value="2"/>
</dbReference>
<dbReference type="Gene3D" id="3.40.50.1220">
    <property type="entry name" value="TPP-binding domain"/>
    <property type="match status" value="1"/>
</dbReference>
<dbReference type="HAMAP" id="MF_01669">
    <property type="entry name" value="IolD"/>
    <property type="match status" value="1"/>
</dbReference>
<dbReference type="InterPro" id="IPR029035">
    <property type="entry name" value="DHS-like_NAD/FAD-binding_dom"/>
</dbReference>
<dbReference type="InterPro" id="IPR030817">
    <property type="entry name" value="Myo_inos_IolD"/>
</dbReference>
<dbReference type="InterPro" id="IPR023757">
    <property type="entry name" value="THcHDO_hydrolase_firmi"/>
</dbReference>
<dbReference type="InterPro" id="IPR029061">
    <property type="entry name" value="THDP-binding"/>
</dbReference>
<dbReference type="InterPro" id="IPR012000">
    <property type="entry name" value="Thiamin_PyroP_enz_cen_dom"/>
</dbReference>
<dbReference type="InterPro" id="IPR012001">
    <property type="entry name" value="Thiamin_PyroP_enz_TPP-bd_dom"/>
</dbReference>
<dbReference type="InterPro" id="IPR045229">
    <property type="entry name" value="TPP_enz"/>
</dbReference>
<dbReference type="InterPro" id="IPR011766">
    <property type="entry name" value="TPP_enzyme_TPP-bd"/>
</dbReference>
<dbReference type="NCBIfam" id="TIGR04377">
    <property type="entry name" value="myo_inos_iolD"/>
    <property type="match status" value="1"/>
</dbReference>
<dbReference type="PANTHER" id="PTHR18968:SF9">
    <property type="entry name" value="3D-(3,5_4)-TRIHYDROXYCYCLOHEXANE-1,2-DIONE HYDROLASE"/>
    <property type="match status" value="1"/>
</dbReference>
<dbReference type="PANTHER" id="PTHR18968">
    <property type="entry name" value="THIAMINE PYROPHOSPHATE ENZYMES"/>
    <property type="match status" value="1"/>
</dbReference>
<dbReference type="Pfam" id="PF02775">
    <property type="entry name" value="TPP_enzyme_C"/>
    <property type="match status" value="1"/>
</dbReference>
<dbReference type="Pfam" id="PF00205">
    <property type="entry name" value="TPP_enzyme_M"/>
    <property type="match status" value="1"/>
</dbReference>
<dbReference type="Pfam" id="PF02776">
    <property type="entry name" value="TPP_enzyme_N"/>
    <property type="match status" value="1"/>
</dbReference>
<dbReference type="SUPFAM" id="SSF52467">
    <property type="entry name" value="DHS-like NAD/FAD-binding domain"/>
    <property type="match status" value="1"/>
</dbReference>
<dbReference type="SUPFAM" id="SSF52518">
    <property type="entry name" value="Thiamin diphosphate-binding fold (THDP-binding)"/>
    <property type="match status" value="2"/>
</dbReference>
<protein>
    <recommendedName>
        <fullName evidence="1">3D-(3,5/4)-trihydroxycyclohexane-1,2-dione hydrolase</fullName>
        <shortName evidence="1">THcHDO hydrolase</shortName>
        <ecNumber evidence="1">3.7.1.22</ecNumber>
    </recommendedName>
</protein>
<evidence type="ECO:0000255" key="1">
    <source>
        <dbReference type="HAMAP-Rule" id="MF_01669"/>
    </source>
</evidence>
<evidence type="ECO:0000305" key="2"/>
<proteinExistence type="inferred from homology"/>
<gene>
    <name evidence="1" type="primary">iolD</name>
    <name type="ordered locus">LMOf2365_0398</name>
</gene>